<reference key="1">
    <citation type="journal article" date="1997" name="Microbiology">
        <title>The Bacillus subtilis genome from gerBC (311 degrees) to licR (334 degrees).</title>
        <authorList>
            <person name="Presecan E."/>
            <person name="Moszer I."/>
            <person name="Boursier L."/>
            <person name="Cruz Ramos H."/>
            <person name="De La Fuente V."/>
            <person name="Hullo M.-F."/>
            <person name="Lelong C."/>
            <person name="Schleich S."/>
            <person name="Sekowska A."/>
            <person name="Song B.H."/>
            <person name="Villani G."/>
            <person name="Kunst F."/>
            <person name="Danchin A."/>
            <person name="Glaser P."/>
        </authorList>
    </citation>
    <scope>NUCLEOTIDE SEQUENCE [GENOMIC DNA]</scope>
    <source>
        <strain>168</strain>
    </source>
</reference>
<reference key="2">
    <citation type="journal article" date="1997" name="Nature">
        <title>The complete genome sequence of the Gram-positive bacterium Bacillus subtilis.</title>
        <authorList>
            <person name="Kunst F."/>
            <person name="Ogasawara N."/>
            <person name="Moszer I."/>
            <person name="Albertini A.M."/>
            <person name="Alloni G."/>
            <person name="Azevedo V."/>
            <person name="Bertero M.G."/>
            <person name="Bessieres P."/>
            <person name="Bolotin A."/>
            <person name="Borchert S."/>
            <person name="Borriss R."/>
            <person name="Boursier L."/>
            <person name="Brans A."/>
            <person name="Braun M."/>
            <person name="Brignell S.C."/>
            <person name="Bron S."/>
            <person name="Brouillet S."/>
            <person name="Bruschi C.V."/>
            <person name="Caldwell B."/>
            <person name="Capuano V."/>
            <person name="Carter N.M."/>
            <person name="Choi S.-K."/>
            <person name="Codani J.-J."/>
            <person name="Connerton I.F."/>
            <person name="Cummings N.J."/>
            <person name="Daniel R.A."/>
            <person name="Denizot F."/>
            <person name="Devine K.M."/>
            <person name="Duesterhoeft A."/>
            <person name="Ehrlich S.D."/>
            <person name="Emmerson P.T."/>
            <person name="Entian K.-D."/>
            <person name="Errington J."/>
            <person name="Fabret C."/>
            <person name="Ferrari E."/>
            <person name="Foulger D."/>
            <person name="Fritz C."/>
            <person name="Fujita M."/>
            <person name="Fujita Y."/>
            <person name="Fuma S."/>
            <person name="Galizzi A."/>
            <person name="Galleron N."/>
            <person name="Ghim S.-Y."/>
            <person name="Glaser P."/>
            <person name="Goffeau A."/>
            <person name="Golightly E.J."/>
            <person name="Grandi G."/>
            <person name="Guiseppi G."/>
            <person name="Guy B.J."/>
            <person name="Haga K."/>
            <person name="Haiech J."/>
            <person name="Harwood C.R."/>
            <person name="Henaut A."/>
            <person name="Hilbert H."/>
            <person name="Holsappel S."/>
            <person name="Hosono S."/>
            <person name="Hullo M.-F."/>
            <person name="Itaya M."/>
            <person name="Jones L.-M."/>
            <person name="Joris B."/>
            <person name="Karamata D."/>
            <person name="Kasahara Y."/>
            <person name="Klaerr-Blanchard M."/>
            <person name="Klein C."/>
            <person name="Kobayashi Y."/>
            <person name="Koetter P."/>
            <person name="Koningstein G."/>
            <person name="Krogh S."/>
            <person name="Kumano M."/>
            <person name="Kurita K."/>
            <person name="Lapidus A."/>
            <person name="Lardinois S."/>
            <person name="Lauber J."/>
            <person name="Lazarevic V."/>
            <person name="Lee S.-M."/>
            <person name="Levine A."/>
            <person name="Liu H."/>
            <person name="Masuda S."/>
            <person name="Mauel C."/>
            <person name="Medigue C."/>
            <person name="Medina N."/>
            <person name="Mellado R.P."/>
            <person name="Mizuno M."/>
            <person name="Moestl D."/>
            <person name="Nakai S."/>
            <person name="Noback M."/>
            <person name="Noone D."/>
            <person name="O'Reilly M."/>
            <person name="Ogawa K."/>
            <person name="Ogiwara A."/>
            <person name="Oudega B."/>
            <person name="Park S.-H."/>
            <person name="Parro V."/>
            <person name="Pohl T.M."/>
            <person name="Portetelle D."/>
            <person name="Porwollik S."/>
            <person name="Prescott A.M."/>
            <person name="Presecan E."/>
            <person name="Pujic P."/>
            <person name="Purnelle B."/>
            <person name="Rapoport G."/>
            <person name="Rey M."/>
            <person name="Reynolds S."/>
            <person name="Rieger M."/>
            <person name="Rivolta C."/>
            <person name="Rocha E."/>
            <person name="Roche B."/>
            <person name="Rose M."/>
            <person name="Sadaie Y."/>
            <person name="Sato T."/>
            <person name="Scanlan E."/>
            <person name="Schleich S."/>
            <person name="Schroeter R."/>
            <person name="Scoffone F."/>
            <person name="Sekiguchi J."/>
            <person name="Sekowska A."/>
            <person name="Seror S.J."/>
            <person name="Serror P."/>
            <person name="Shin B.-S."/>
            <person name="Soldo B."/>
            <person name="Sorokin A."/>
            <person name="Tacconi E."/>
            <person name="Takagi T."/>
            <person name="Takahashi H."/>
            <person name="Takemaru K."/>
            <person name="Takeuchi M."/>
            <person name="Tamakoshi A."/>
            <person name="Tanaka T."/>
            <person name="Terpstra P."/>
            <person name="Tognoni A."/>
            <person name="Tosato V."/>
            <person name="Uchiyama S."/>
            <person name="Vandenbol M."/>
            <person name="Vannier F."/>
            <person name="Vassarotti A."/>
            <person name="Viari A."/>
            <person name="Wambutt R."/>
            <person name="Wedler E."/>
            <person name="Wedler H."/>
            <person name="Weitzenegger T."/>
            <person name="Winters P."/>
            <person name="Wipat A."/>
            <person name="Yamamoto H."/>
            <person name="Yamane K."/>
            <person name="Yasumoto K."/>
            <person name="Yata K."/>
            <person name="Yoshida K."/>
            <person name="Yoshikawa H.-F."/>
            <person name="Zumstein E."/>
            <person name="Yoshikawa H."/>
            <person name="Danchin A."/>
        </authorList>
    </citation>
    <scope>NUCLEOTIDE SEQUENCE [LARGE SCALE GENOMIC DNA]</scope>
    <source>
        <strain>168</strain>
    </source>
</reference>
<reference key="3">
    <citation type="journal article" date="2009" name="Microbiology">
        <title>From a consortium sequence to a unified sequence: the Bacillus subtilis 168 reference genome a decade later.</title>
        <authorList>
            <person name="Barbe V."/>
            <person name="Cruveiller S."/>
            <person name="Kunst F."/>
            <person name="Lenoble P."/>
            <person name="Meurice G."/>
            <person name="Sekowska A."/>
            <person name="Vallenet D."/>
            <person name="Wang T."/>
            <person name="Moszer I."/>
            <person name="Medigue C."/>
            <person name="Danchin A."/>
        </authorList>
    </citation>
    <scope>SEQUENCE REVISION TO C-TERMINUS</scope>
</reference>
<reference key="4">
    <citation type="journal article" date="2000" name="Gene">
        <title>Characterization of ywhE, which encodes a putative high-molecular-weight class A penicillin-binding protein in Bacillus subtilis.</title>
        <authorList>
            <person name="Pedersen L.B."/>
            <person name="Ragkousi K."/>
            <person name="Cammett T.J."/>
            <person name="Melly E."/>
            <person name="Sekowska A."/>
            <person name="Schopick E."/>
            <person name="Murray T."/>
            <person name="Setlow P."/>
        </authorList>
    </citation>
    <scope>FUNCTION</scope>
    <scope>DEVELOPMENTAL STAGE</scope>
    <scope>DISRUPTION PHENOTYPE</scope>
</reference>
<reference key="5">
    <citation type="journal article" date="2001" name="J. Bacteriol.">
        <title>Two class A high-molecular-weight penicillin-binding proteins of Bacillus subtilis play redundant roles in sporulation.</title>
        <authorList>
            <person name="McPherson D.C."/>
            <person name="Driks A."/>
            <person name="Popham D.L."/>
        </authorList>
    </citation>
    <scope>FUNCTION</scope>
    <scope>DISRUPTION PHENOTYPE</scope>
</reference>
<keyword id="KW-0121">Carboxypeptidase</keyword>
<keyword id="KW-1003">Cell membrane</keyword>
<keyword id="KW-0133">Cell shape</keyword>
<keyword id="KW-0961">Cell wall biogenesis/degradation</keyword>
<keyword id="KW-0328">Glycosyltransferase</keyword>
<keyword id="KW-0378">Hydrolase</keyword>
<keyword id="KW-0472">Membrane</keyword>
<keyword id="KW-0511">Multifunctional enzyme</keyword>
<keyword id="KW-0573">Peptidoglycan synthesis</keyword>
<keyword id="KW-0645">Protease</keyword>
<keyword id="KW-1185">Reference proteome</keyword>
<keyword id="KW-0735">Signal-anchor</keyword>
<keyword id="KW-0808">Transferase</keyword>
<keyword id="KW-0812">Transmembrane</keyword>
<keyword id="KW-1133">Transmembrane helix</keyword>
<protein>
    <recommendedName>
        <fullName>Penicillin-binding protein 2D</fullName>
        <shortName>PBP-2D</shortName>
        <shortName>PBP2d</shortName>
    </recommendedName>
    <domain>
        <recommendedName>
            <fullName>Penicillin-insensitive transglycosylase</fullName>
            <ecNumber evidence="1">2.4.99.28</ecNumber>
        </recommendedName>
        <alternativeName>
            <fullName>Peptidoglycan TGase</fullName>
        </alternativeName>
    </domain>
    <domain>
        <recommendedName>
            <fullName>Penicillin-sensitive transpeptidase</fullName>
            <ecNumber evidence="1">3.4.16.4</ecNumber>
        </recommendedName>
        <alternativeName>
            <fullName>DD-transpeptidase</fullName>
        </alternativeName>
    </domain>
</protein>
<proteinExistence type="evidence at transcript level"/>
<sequence>MDAMTNKRLRLTLKTVRAFIFLGAFAALAAAAVFMTVILIAKYQGAPSVQVPQSTILYASDGSKLGETNYGEKRYWVPLKDMNPTIVKATVAIEDQNFYDHHGFDYKRMAGAALADLKAFAKVQGASTITQQYARNLYLEHDKTWKRKWNEAFYTIRLEQNYSKDEILEGYLNTIYYGHGAYGIEAASRLYFGKHAKNLTDAEAALLAGIPKGPSGYSPYVNETKAKERQKTIVRMMEKQQMISQKKADELIKEPLSYQPLNKQVSKRKAPYFYDNAMRELEKKLGMTREQIETSGLNVYTTVDKRMQRIAEETITETVNAGSDIQVGFSAIDPRTGNVLALVGGRDYQKSPFDRTTQAKRQPASTIKPLLYYKAIQSGFTPVTLMKSEETEFQIDAKGETYSPSNYNGYYANKPITLLQALALSDNIYAVKTHLFLGTNKLVKTAKEFGITAHLQALPSLALGTEPVRPIEMVNAYAMLANGGKKIEPTFISRVTDAAGHVLYENPNQHKQVLDEKAAFVTASMMTGMFDIDLNGYTSVTGRTIANRLTRTYAGKSGTTSADSWMIGFNPKLAAGVWTGYDKNSTIDSVEEKSYAKTIWADFMEDALKGEPETAFKPPKGVTGVYIDPETGYSSGPGCAAKHYTYFVKGTEPANVCYGAEPAKQTKDRLPSKEKPASEKKWWDKWLGRHH</sequence>
<accession>P70997</accession>
<accession>Q794Z1</accession>
<name>PBPG_BACSU</name>
<gene>
    <name type="primary">pbpG</name>
    <name type="synonym">ywhE</name>
    <name type="ordered locus">BSU37510</name>
</gene>
<comment type="function">
    <text evidence="5 6">Involved in the polymerization and cross-linking of spore peptidoglycan. May be required for synthesis of the spore germ cell wall, the first layer of peptidoglycan synthesized on the surface of the inner forespore membrane.</text>
</comment>
<comment type="catalytic activity">
    <reaction evidence="1">
        <text>[GlcNAc-(1-&gt;4)-Mur2Ac(oyl-L-Ala-gamma-D-Glu-L-Lys-D-Ala-D-Ala)](n)-di-trans,octa-cis-undecaprenyl diphosphate + beta-D-GlcNAc-(1-&gt;4)-Mur2Ac(oyl-L-Ala-gamma-D-Glu-L-Lys-D-Ala-D-Ala)-di-trans,octa-cis-undecaprenyl diphosphate = [GlcNAc-(1-&gt;4)-Mur2Ac(oyl-L-Ala-gamma-D-Glu-L-Lys-D-Ala-D-Ala)](n+1)-di-trans,octa-cis-undecaprenyl diphosphate + di-trans,octa-cis-undecaprenyl diphosphate + H(+)</text>
        <dbReference type="Rhea" id="RHEA:23708"/>
        <dbReference type="Rhea" id="RHEA-COMP:9602"/>
        <dbReference type="Rhea" id="RHEA-COMP:9603"/>
        <dbReference type="ChEBI" id="CHEBI:15378"/>
        <dbReference type="ChEBI" id="CHEBI:58405"/>
        <dbReference type="ChEBI" id="CHEBI:60033"/>
        <dbReference type="ChEBI" id="CHEBI:78435"/>
        <dbReference type="EC" id="2.4.99.28"/>
    </reaction>
</comment>
<comment type="catalytic activity">
    <reaction evidence="1">
        <text>Preferential cleavage: (Ac)2-L-Lys-D-Ala-|-D-Ala. Also transpeptidation of peptidyl-alanyl moieties that are N-acyl substituents of D-alanine.</text>
        <dbReference type="EC" id="3.4.16.4"/>
    </reaction>
</comment>
<comment type="pathway">
    <text>Cell wall biogenesis; peptidoglycan biosynthesis.</text>
</comment>
<comment type="subcellular location">
    <subcellularLocation>
        <location>Cell membrane</location>
        <topology>Single-pass membrane protein</topology>
    </subcellularLocation>
</comment>
<comment type="developmental stage">
    <text evidence="5">Sporulation specific. Expressed predominantly, if not exclusively, in the forespore.</text>
</comment>
<comment type="disruption phenotype">
    <text evidence="5 6">No visible phenotype; due to the redundancy with PbpF. Spores have normal heat-resistance, cortex structure, and germination and outgrowth properties.</text>
</comment>
<comment type="similarity">
    <text evidence="7">In the N-terminal section; belongs to the glycosyltransferase 51 family.</text>
</comment>
<comment type="similarity">
    <text evidence="7">In the C-terminal section; belongs to the transpeptidase family.</text>
</comment>
<comment type="sequence caution" evidence="7">
    <conflict type="frameshift">
        <sequence resource="EMBL-CDS" id="CAB02515"/>
    </conflict>
</comment>
<organism>
    <name type="scientific">Bacillus subtilis (strain 168)</name>
    <dbReference type="NCBI Taxonomy" id="224308"/>
    <lineage>
        <taxon>Bacteria</taxon>
        <taxon>Bacillati</taxon>
        <taxon>Bacillota</taxon>
        <taxon>Bacilli</taxon>
        <taxon>Bacillales</taxon>
        <taxon>Bacillaceae</taxon>
        <taxon>Bacillus</taxon>
    </lineage>
</organism>
<feature type="chain" id="PRO_0000360165" description="Penicillin-binding protein 2D">
    <location>
        <begin position="1"/>
        <end position="691"/>
    </location>
</feature>
<feature type="topological domain" description="Cytoplasmic" evidence="3">
    <location>
        <begin position="1"/>
        <end position="19"/>
    </location>
</feature>
<feature type="transmembrane region" description="Helical; Signal-anchor for type II membrane protein" evidence="3">
    <location>
        <begin position="20"/>
        <end position="40"/>
    </location>
</feature>
<feature type="topological domain" description="Extracellular" evidence="3">
    <location>
        <begin position="41"/>
        <end position="691"/>
    </location>
</feature>
<feature type="region of interest" description="Transglycosylase">
    <location>
        <begin position="55"/>
        <end position="223"/>
    </location>
</feature>
<feature type="region of interest" description="Transpeptidase">
    <location>
        <begin position="327"/>
        <end position="605"/>
    </location>
</feature>
<feature type="region of interest" description="Disordered" evidence="4">
    <location>
        <begin position="663"/>
        <end position="691"/>
    </location>
</feature>
<feature type="compositionally biased region" description="Basic and acidic residues" evidence="4">
    <location>
        <begin position="664"/>
        <end position="691"/>
    </location>
</feature>
<feature type="active site" description="Proton donor; for transglycosylase activity" evidence="2">
    <location>
        <position position="94"/>
    </location>
</feature>
<feature type="active site" description="Acyl-ester intermediate; for transpeptidase activity" evidence="2">
    <location>
        <position position="365"/>
    </location>
</feature>
<dbReference type="EC" id="2.4.99.28" evidence="1"/>
<dbReference type="EC" id="3.4.16.4" evidence="1"/>
<dbReference type="EMBL" id="Z80360">
    <property type="protein sequence ID" value="CAB02515.1"/>
    <property type="status" value="ALT_FRAME"/>
    <property type="molecule type" value="Genomic_DNA"/>
</dbReference>
<dbReference type="EMBL" id="AL009126">
    <property type="protein sequence ID" value="CAB15778.2"/>
    <property type="molecule type" value="Genomic_DNA"/>
</dbReference>
<dbReference type="PIR" id="F70057">
    <property type="entry name" value="F70057"/>
</dbReference>
<dbReference type="RefSeq" id="NP_391631.2">
    <property type="nucleotide sequence ID" value="NC_000964.3"/>
</dbReference>
<dbReference type="RefSeq" id="WP_003227540.1">
    <property type="nucleotide sequence ID" value="NZ_OZ025638.1"/>
</dbReference>
<dbReference type="SMR" id="P70997"/>
<dbReference type="FunCoup" id="P70997">
    <property type="interactions" value="346"/>
</dbReference>
<dbReference type="IntAct" id="P70997">
    <property type="interactions" value="1"/>
</dbReference>
<dbReference type="STRING" id="224308.BSU37510"/>
<dbReference type="CAZy" id="GT51">
    <property type="family name" value="Glycosyltransferase Family 51"/>
</dbReference>
<dbReference type="PaxDb" id="224308-BSU37510"/>
<dbReference type="EnsemblBacteria" id="CAB15778">
    <property type="protein sequence ID" value="CAB15778"/>
    <property type="gene ID" value="BSU_37510"/>
</dbReference>
<dbReference type="GeneID" id="937200"/>
<dbReference type="KEGG" id="bsu:BSU37510"/>
<dbReference type="PATRIC" id="fig|224308.179.peg.4062"/>
<dbReference type="eggNOG" id="COG0744">
    <property type="taxonomic scope" value="Bacteria"/>
</dbReference>
<dbReference type="InParanoid" id="P70997"/>
<dbReference type="OrthoDB" id="9766909at2"/>
<dbReference type="PhylomeDB" id="P70997"/>
<dbReference type="BioCyc" id="BSUB:BSU37510-MONOMER"/>
<dbReference type="UniPathway" id="UPA00219"/>
<dbReference type="Proteomes" id="UP000001570">
    <property type="component" value="Chromosome"/>
</dbReference>
<dbReference type="GO" id="GO:0030288">
    <property type="term" value="C:outer membrane-bounded periplasmic space"/>
    <property type="evidence" value="ECO:0000318"/>
    <property type="project" value="GO_Central"/>
</dbReference>
<dbReference type="GO" id="GO:0005886">
    <property type="term" value="C:plasma membrane"/>
    <property type="evidence" value="ECO:0007669"/>
    <property type="project" value="UniProtKB-SubCell"/>
</dbReference>
<dbReference type="GO" id="GO:0008658">
    <property type="term" value="F:penicillin binding"/>
    <property type="evidence" value="ECO:0007669"/>
    <property type="project" value="InterPro"/>
</dbReference>
<dbReference type="GO" id="GO:0008955">
    <property type="term" value="F:peptidoglycan glycosyltransferase activity"/>
    <property type="evidence" value="ECO:0000318"/>
    <property type="project" value="GO_Central"/>
</dbReference>
<dbReference type="GO" id="GO:0009002">
    <property type="term" value="F:serine-type D-Ala-D-Ala carboxypeptidase activity"/>
    <property type="evidence" value="ECO:0007669"/>
    <property type="project" value="UniProtKB-EC"/>
</dbReference>
<dbReference type="GO" id="GO:0071555">
    <property type="term" value="P:cell wall organization"/>
    <property type="evidence" value="ECO:0007669"/>
    <property type="project" value="UniProtKB-KW"/>
</dbReference>
<dbReference type="GO" id="GO:0009252">
    <property type="term" value="P:peptidoglycan biosynthetic process"/>
    <property type="evidence" value="ECO:0000318"/>
    <property type="project" value="GO_Central"/>
</dbReference>
<dbReference type="GO" id="GO:0006508">
    <property type="term" value="P:proteolysis"/>
    <property type="evidence" value="ECO:0007669"/>
    <property type="project" value="UniProtKB-KW"/>
</dbReference>
<dbReference type="GO" id="GO:0008360">
    <property type="term" value="P:regulation of cell shape"/>
    <property type="evidence" value="ECO:0007669"/>
    <property type="project" value="UniProtKB-KW"/>
</dbReference>
<dbReference type="FunFam" id="1.10.3810.10:FF:000001">
    <property type="entry name" value="Penicillin-binding protein 1A"/>
    <property type="match status" value="1"/>
</dbReference>
<dbReference type="FunFam" id="3.40.710.10:FF:000028">
    <property type="entry name" value="Penicillin-binding protein 1A"/>
    <property type="match status" value="1"/>
</dbReference>
<dbReference type="Gene3D" id="1.10.3810.10">
    <property type="entry name" value="Biosynthetic peptidoglycan transglycosylase-like"/>
    <property type="match status" value="1"/>
</dbReference>
<dbReference type="Gene3D" id="3.40.710.10">
    <property type="entry name" value="DD-peptidase/beta-lactamase superfamily"/>
    <property type="match status" value="1"/>
</dbReference>
<dbReference type="InterPro" id="IPR012338">
    <property type="entry name" value="Beta-lactam/transpept-like"/>
</dbReference>
<dbReference type="InterPro" id="IPR001264">
    <property type="entry name" value="Glyco_trans_51"/>
</dbReference>
<dbReference type="InterPro" id="IPR050396">
    <property type="entry name" value="Glycosyltr_51/Transpeptidase"/>
</dbReference>
<dbReference type="InterPro" id="IPR023346">
    <property type="entry name" value="Lysozyme-like_dom_sf"/>
</dbReference>
<dbReference type="InterPro" id="IPR036950">
    <property type="entry name" value="PBP_transglycosylase"/>
</dbReference>
<dbReference type="InterPro" id="IPR001460">
    <property type="entry name" value="PCN-bd_Tpept"/>
</dbReference>
<dbReference type="NCBIfam" id="TIGR02074">
    <property type="entry name" value="PBP_1a_fam"/>
    <property type="match status" value="1"/>
</dbReference>
<dbReference type="PANTHER" id="PTHR32282">
    <property type="entry name" value="BINDING PROTEIN TRANSPEPTIDASE, PUTATIVE-RELATED"/>
    <property type="match status" value="1"/>
</dbReference>
<dbReference type="PANTHER" id="PTHR32282:SF11">
    <property type="entry name" value="PENICILLIN-BINDING PROTEIN 1B"/>
    <property type="match status" value="1"/>
</dbReference>
<dbReference type="Pfam" id="PF00912">
    <property type="entry name" value="Transgly"/>
    <property type="match status" value="1"/>
</dbReference>
<dbReference type="Pfam" id="PF00905">
    <property type="entry name" value="Transpeptidase"/>
    <property type="match status" value="1"/>
</dbReference>
<dbReference type="SUPFAM" id="SSF56601">
    <property type="entry name" value="beta-lactamase/transpeptidase-like"/>
    <property type="match status" value="1"/>
</dbReference>
<dbReference type="SUPFAM" id="SSF53955">
    <property type="entry name" value="Lysozyme-like"/>
    <property type="match status" value="1"/>
</dbReference>
<evidence type="ECO:0000250" key="1">
    <source>
        <dbReference type="UniProtKB" id="P02918"/>
    </source>
</evidence>
<evidence type="ECO:0000250" key="2">
    <source>
        <dbReference type="UniProtKB" id="P02919"/>
    </source>
</evidence>
<evidence type="ECO:0000255" key="3"/>
<evidence type="ECO:0000256" key="4">
    <source>
        <dbReference type="SAM" id="MobiDB-lite"/>
    </source>
</evidence>
<evidence type="ECO:0000269" key="5">
    <source>
    </source>
</evidence>
<evidence type="ECO:0000269" key="6">
    <source>
    </source>
</evidence>
<evidence type="ECO:0000305" key="7"/>